<evidence type="ECO:0000250" key="1"/>
<evidence type="ECO:0000255" key="2"/>
<evidence type="ECO:0000255" key="3">
    <source>
        <dbReference type="PROSITE-ProRule" id="PRU10095"/>
    </source>
</evidence>
<evidence type="ECO:0000305" key="4"/>
<accession>Q43880</accession>
<protein>
    <recommendedName>
        <fullName>Thermolysin</fullName>
        <ecNumber>3.4.24.27</ecNumber>
    </recommendedName>
    <alternativeName>
        <fullName>Thermostable neutral proteinase</fullName>
    </alternativeName>
</protein>
<comment type="function">
    <text>Extracellular zinc metalloprotease.</text>
</comment>
<comment type="catalytic activity">
    <reaction>
        <text>Preferential cleavage: Xaa-|-Leu &gt; Xaa-|-Phe.</text>
        <dbReference type="EC" id="3.4.24.27"/>
    </reaction>
</comment>
<comment type="cofactor">
    <cofactor>
        <name>Ca(2+)</name>
        <dbReference type="ChEBI" id="CHEBI:29108"/>
    </cofactor>
    <text>Binds 4 Ca(2+) ions per subunit.</text>
</comment>
<comment type="cofactor">
    <cofactor>
        <name>Zn(2+)</name>
        <dbReference type="ChEBI" id="CHEBI:29105"/>
    </cofactor>
    <text>Binds 1 zinc ion per subunit.</text>
</comment>
<comment type="biophysicochemical properties">
    <temperatureDependence>
        <text>Thermostable.</text>
    </temperatureDependence>
</comment>
<comment type="subcellular location">
    <subcellularLocation>
        <location>Secreted</location>
    </subcellularLocation>
</comment>
<comment type="similarity">
    <text evidence="4">Belongs to the peptidase M4 family.</text>
</comment>
<organism>
    <name type="scientific">Alicyclobacillus acidocaldarius subsp. acidocaldarius</name>
    <name type="common">Bacillus acidocaldarius</name>
    <dbReference type="NCBI Taxonomy" id="1388"/>
    <lineage>
        <taxon>Bacteria</taxon>
        <taxon>Bacillati</taxon>
        <taxon>Bacillota</taxon>
        <taxon>Bacilli</taxon>
        <taxon>Bacillales</taxon>
        <taxon>Alicyclobacillaceae</taxon>
        <taxon>Alicyclobacillus</taxon>
    </lineage>
</organism>
<reference key="1">
    <citation type="journal article" date="1995" name="Gene">
        <title>Cloning and sequencing of the neutral protease-encoding gene from a thermophilic strain of Bacillus sp.</title>
        <authorList>
            <person name="Vecerek B."/>
            <person name="Kyslik P."/>
        </authorList>
    </citation>
    <scope>NUCLEOTIDE SEQUENCE [GENOMIC DNA]</scope>
    <source>
        <strain>BT1</strain>
    </source>
</reference>
<keyword id="KW-0106">Calcium</keyword>
<keyword id="KW-0378">Hydrolase</keyword>
<keyword id="KW-0479">Metal-binding</keyword>
<keyword id="KW-0482">Metalloprotease</keyword>
<keyword id="KW-0645">Protease</keyword>
<keyword id="KW-0964">Secreted</keyword>
<keyword id="KW-0732">Signal</keyword>
<keyword id="KW-0862">Zinc</keyword>
<keyword id="KW-0865">Zymogen</keyword>
<dbReference type="EC" id="3.4.24.27"/>
<dbReference type="EMBL" id="U07824">
    <property type="protein sequence ID" value="AAC43402.1"/>
    <property type="molecule type" value="Genomic_DNA"/>
</dbReference>
<dbReference type="SMR" id="Q43880"/>
<dbReference type="MEROPS" id="M04.018"/>
<dbReference type="GO" id="GO:0005576">
    <property type="term" value="C:extracellular region"/>
    <property type="evidence" value="ECO:0007669"/>
    <property type="project" value="UniProtKB-SubCell"/>
</dbReference>
<dbReference type="GO" id="GO:0046872">
    <property type="term" value="F:metal ion binding"/>
    <property type="evidence" value="ECO:0007669"/>
    <property type="project" value="UniProtKB-KW"/>
</dbReference>
<dbReference type="GO" id="GO:0004222">
    <property type="term" value="F:metalloendopeptidase activity"/>
    <property type="evidence" value="ECO:0007669"/>
    <property type="project" value="InterPro"/>
</dbReference>
<dbReference type="GO" id="GO:0006508">
    <property type="term" value="P:proteolysis"/>
    <property type="evidence" value="ECO:0007669"/>
    <property type="project" value="UniProtKB-KW"/>
</dbReference>
<dbReference type="CDD" id="cd09597">
    <property type="entry name" value="M4_TLP"/>
    <property type="match status" value="1"/>
</dbReference>
<dbReference type="FunFam" id="1.10.390.10:FF:000012">
    <property type="entry name" value="Thermolysin"/>
    <property type="match status" value="1"/>
</dbReference>
<dbReference type="Gene3D" id="3.10.170.10">
    <property type="match status" value="1"/>
</dbReference>
<dbReference type="Gene3D" id="3.10.450.40">
    <property type="match status" value="1"/>
</dbReference>
<dbReference type="Gene3D" id="3.10.450.490">
    <property type="match status" value="1"/>
</dbReference>
<dbReference type="Gene3D" id="1.10.390.10">
    <property type="entry name" value="Neutral Protease Domain 2"/>
    <property type="match status" value="1"/>
</dbReference>
<dbReference type="InterPro" id="IPR011096">
    <property type="entry name" value="FTP_domain"/>
</dbReference>
<dbReference type="InterPro" id="IPR025711">
    <property type="entry name" value="PepSY"/>
</dbReference>
<dbReference type="InterPro" id="IPR023612">
    <property type="entry name" value="Peptidase_M4"/>
</dbReference>
<dbReference type="InterPro" id="IPR027268">
    <property type="entry name" value="Peptidase_M4/M1_CTD_sf"/>
</dbReference>
<dbReference type="InterPro" id="IPR001570">
    <property type="entry name" value="Peptidase_M4_C_domain"/>
</dbReference>
<dbReference type="InterPro" id="IPR013856">
    <property type="entry name" value="Peptidase_M4_domain"/>
</dbReference>
<dbReference type="InterPro" id="IPR050728">
    <property type="entry name" value="Zinc_Metalloprotease_M4"/>
</dbReference>
<dbReference type="PANTHER" id="PTHR33794">
    <property type="entry name" value="BACILLOLYSIN"/>
    <property type="match status" value="1"/>
</dbReference>
<dbReference type="PANTHER" id="PTHR33794:SF3">
    <property type="entry name" value="NEUTRAL PROTEASE B"/>
    <property type="match status" value="1"/>
</dbReference>
<dbReference type="Pfam" id="PF07504">
    <property type="entry name" value="FTP"/>
    <property type="match status" value="1"/>
</dbReference>
<dbReference type="Pfam" id="PF03413">
    <property type="entry name" value="PepSY"/>
    <property type="match status" value="1"/>
</dbReference>
<dbReference type="Pfam" id="PF01447">
    <property type="entry name" value="Peptidase_M4"/>
    <property type="match status" value="1"/>
</dbReference>
<dbReference type="Pfam" id="PF02868">
    <property type="entry name" value="Peptidase_M4_C"/>
    <property type="match status" value="1"/>
</dbReference>
<dbReference type="PRINTS" id="PR00730">
    <property type="entry name" value="THERMOLYSIN"/>
</dbReference>
<dbReference type="SUPFAM" id="SSF55486">
    <property type="entry name" value="Metalloproteases ('zincins'), catalytic domain"/>
    <property type="match status" value="1"/>
</dbReference>
<dbReference type="PROSITE" id="PS00142">
    <property type="entry name" value="ZINC_PROTEASE"/>
    <property type="match status" value="1"/>
</dbReference>
<proteinExistence type="evidence at protein level"/>
<feature type="signal peptide" evidence="2">
    <location>
        <begin position="1"/>
        <end position="25"/>
    </location>
</feature>
<feature type="propeptide" id="PRO_0000028584" description="Activation peptide">
    <location>
        <begin position="26"/>
        <end position="228"/>
    </location>
</feature>
<feature type="chain" id="PRO_0000028585" description="Thermolysin">
    <location>
        <begin position="229"/>
        <end position="546"/>
    </location>
</feature>
<feature type="active site" evidence="3">
    <location>
        <position position="373"/>
    </location>
</feature>
<feature type="active site" description="Proton donor" evidence="3">
    <location>
        <position position="461"/>
    </location>
</feature>
<feature type="binding site" evidence="1">
    <location>
        <position position="287"/>
    </location>
    <ligand>
        <name>Ca(2+)</name>
        <dbReference type="ChEBI" id="CHEBI:29108"/>
        <label>1</label>
    </ligand>
</feature>
<feature type="binding site" evidence="1">
    <location>
        <position position="289"/>
    </location>
    <ligand>
        <name>Ca(2+)</name>
        <dbReference type="ChEBI" id="CHEBI:29108"/>
        <label>1</label>
    </ligand>
</feature>
<feature type="binding site" evidence="1">
    <location>
        <position position="291"/>
    </location>
    <ligand>
        <name>Ca(2+)</name>
        <dbReference type="ChEBI" id="CHEBI:29108"/>
        <label>1</label>
    </ligand>
</feature>
<feature type="binding site" evidence="1">
    <location>
        <position position="368"/>
    </location>
    <ligand>
        <name>Ca(2+)</name>
        <dbReference type="ChEBI" id="CHEBI:29108"/>
        <label>2</label>
    </ligand>
</feature>
<feature type="binding site" evidence="3">
    <location>
        <position position="372"/>
    </location>
    <ligand>
        <name>Zn(2+)</name>
        <dbReference type="ChEBI" id="CHEBI:29105"/>
        <note>catalytic</note>
    </ligand>
</feature>
<feature type="binding site" evidence="3">
    <location>
        <position position="376"/>
    </location>
    <ligand>
        <name>Zn(2+)</name>
        <dbReference type="ChEBI" id="CHEBI:29105"/>
        <note>catalytic</note>
    </ligand>
</feature>
<feature type="binding site" evidence="3">
    <location>
        <position position="396"/>
    </location>
    <ligand>
        <name>Zn(2+)</name>
        <dbReference type="ChEBI" id="CHEBI:29105"/>
        <note>catalytic</note>
    </ligand>
</feature>
<feature type="binding site" evidence="1">
    <location>
        <position position="407"/>
    </location>
    <ligand>
        <name>Ca(2+)</name>
        <dbReference type="ChEBI" id="CHEBI:29108"/>
        <label>2</label>
    </ligand>
</feature>
<feature type="binding site" evidence="1">
    <location>
        <position position="407"/>
    </location>
    <ligand>
        <name>Ca(2+)</name>
        <dbReference type="ChEBI" id="CHEBI:29108"/>
        <label>3</label>
    </ligand>
</feature>
<feature type="binding site" evidence="1">
    <location>
        <position position="413"/>
    </location>
    <ligand>
        <name>Ca(2+)</name>
        <dbReference type="ChEBI" id="CHEBI:29108"/>
        <label>3</label>
    </ligand>
</feature>
<feature type="binding site" evidence="1">
    <location>
        <position position="415"/>
    </location>
    <ligand>
        <name>Ca(2+)</name>
        <dbReference type="ChEBI" id="CHEBI:29108"/>
        <label>2</label>
    </ligand>
</feature>
<feature type="binding site" evidence="1">
    <location>
        <position position="415"/>
    </location>
    <ligand>
        <name>Ca(2+)</name>
        <dbReference type="ChEBI" id="CHEBI:29108"/>
        <label>3</label>
    </ligand>
</feature>
<feature type="binding site" evidence="1">
    <location>
        <position position="417"/>
    </location>
    <ligand>
        <name>Ca(2+)</name>
        <dbReference type="ChEBI" id="CHEBI:29108"/>
        <label>2</label>
    </ligand>
</feature>
<feature type="binding site" evidence="1">
    <location>
        <position position="420"/>
    </location>
    <ligand>
        <name>Ca(2+)</name>
        <dbReference type="ChEBI" id="CHEBI:29108"/>
        <label>2</label>
    </ligand>
</feature>
<feature type="binding site" evidence="1">
    <location>
        <position position="420"/>
    </location>
    <ligand>
        <name>Ca(2+)</name>
        <dbReference type="ChEBI" id="CHEBI:29108"/>
        <label>3</label>
    </ligand>
</feature>
<feature type="binding site" evidence="1">
    <location>
        <position position="423"/>
    </location>
    <ligand>
        <name>Ca(2+)</name>
        <dbReference type="ChEBI" id="CHEBI:29108"/>
        <label>4</label>
    </ligand>
</feature>
<feature type="binding site" evidence="1">
    <location>
        <position position="424"/>
    </location>
    <ligand>
        <name>Ca(2+)</name>
        <dbReference type="ChEBI" id="CHEBI:29108"/>
        <label>4</label>
    </ligand>
</feature>
<feature type="binding site" evidence="1">
    <location>
        <position position="427"/>
    </location>
    <ligand>
        <name>Ca(2+)</name>
        <dbReference type="ChEBI" id="CHEBI:29108"/>
        <label>4</label>
    </ligand>
</feature>
<feature type="binding site" evidence="1">
    <location>
        <position position="430"/>
    </location>
    <ligand>
        <name>Ca(2+)</name>
        <dbReference type="ChEBI" id="CHEBI:29108"/>
        <label>4</label>
    </ligand>
</feature>
<name>THER_ALIAC</name>
<sequence length="546" mass="59770">MNKRAMLGAIGLAFGLMAWPFGASAKEKSMVWNEQWKTPSFVSGSLLKGEDAPEELVYRYLDQEKNTFQLGGQARERLSLIGKQTDELGHTVMRFEQRYRGIPVYGAVLVAHVNDGELSSLSGTLIPNLDKRTLKTEAAISIQQAEMIAKQDVADAVTKERPAAEEGKPTRLVIYPDGETPRLAYEVNVRFLTPVPGNWIYMIDAADGKVLNKWNQMDEAKPGGGQPVAGTSTVGVGRGVLGDQKYINTTYSSYYGYYYLQDNTRGSGIFTYDGRNRTVLPGSLWADGDNQFFASYDAAAVDAHYYAGVVYDYYKNVHGRLSYDGSNAAIRSTVHYGRGYNNAFWNGSQMVYGDGDGQTFLPFSGGIDVVGHELTHAVTDYTAGLVYQNESGAINEAMSDIFGTLVEFYANRNPDWEIGEDIYTPGIAGDALRSMSDPAKYGDPDHYSKRYTGTQDNGGVHTNSGIINKAAYLLSQGGVHYGVSVTGIGRDKMGKIFYRALVYYLTPTSNFSQLRAACVQAAADLYGSTSQEVNSVKQAFNAVGVY</sequence>